<comment type="catalytic activity">
    <reaction evidence="3">
        <text>S-ubiquitinyl-[E2 ubiquitin-conjugating enzyme]-L-cysteine + [acceptor protein]-L-lysine = [E2 ubiquitin-conjugating enzyme]-L-cysteine + N(6)-ubiquitinyl-[acceptor protein]-L-lysine.</text>
        <dbReference type="EC" id="2.3.2.27"/>
    </reaction>
</comment>
<comment type="pathway">
    <text>Protein modification; protein ubiquitination.</text>
</comment>
<comment type="domain">
    <text>The RING-type zinc finger domain mediates binding to an E2 ubiquitin-conjugating enzyme.</text>
</comment>
<comment type="similarity">
    <text evidence="3">Belongs to the RING-type zinc finger family.</text>
</comment>
<feature type="chain" id="PRO_0000398780" description="Probable E3 ubiquitin-protein ligase BAH1-like 1">
    <location>
        <begin position="1"/>
        <end position="321"/>
    </location>
</feature>
<feature type="domain" description="SPX" evidence="2">
    <location>
        <begin position="1"/>
        <end position="149"/>
    </location>
</feature>
<feature type="zinc finger region" description="RING-type" evidence="1">
    <location>
        <begin position="217"/>
        <end position="266"/>
    </location>
</feature>
<gene>
    <name type="ORF">OsI_27296</name>
</gene>
<protein>
    <recommendedName>
        <fullName>Probable E3 ubiquitin-protein ligase BAH1-like 1</fullName>
        <ecNumber evidence="3">2.3.2.27</ecNumber>
    </recommendedName>
    <alternativeName>
        <fullName evidence="3">RING-type E3 ubiquitin transferase BAH1-like 1</fullName>
    </alternativeName>
</protein>
<evidence type="ECO:0000255" key="1">
    <source>
        <dbReference type="PROSITE-ProRule" id="PRU00175"/>
    </source>
</evidence>
<evidence type="ECO:0000255" key="2">
    <source>
        <dbReference type="PROSITE-ProRule" id="PRU00714"/>
    </source>
</evidence>
<evidence type="ECO:0000305" key="3"/>
<sequence length="321" mass="36386">MKFAKKYEKYMKGMDEELPGVGLKRLKKLLKKCRSDLQSHENDGSSAGRCPGHCSVCDGSFFPSLLNEMSAVVGCFNEKAKKLLELHLASGFKKYTMWFTSKGHKSHGALIQQGKDLVTYAIINAVAMRKILKKYDKIHYSKQGQEFKAQAQSLHIEILQSPWLCELMAFYMNLRRSKKNNGAMELFGDCSLVFDDDKPTISCNLFDSMRVDISLTCSICLDTVFDPVALSCGHIYCYLCSCSAASVTIVDGLKSAERKSKCPLCRQAGVFPNAVHLDELNMLLSYSCPEYWEKRIQMERVERVRLAKEHWESQCRAFLGM</sequence>
<name>BAHL2_ORYSI</name>
<proteinExistence type="inferred from homology"/>
<accession>B8B5U8</accession>
<dbReference type="EC" id="2.3.2.27" evidence="3"/>
<dbReference type="EMBL" id="CM000132">
    <property type="protein sequence ID" value="EEC82667.1"/>
    <property type="molecule type" value="Genomic_DNA"/>
</dbReference>
<dbReference type="SMR" id="B8B5U8"/>
<dbReference type="STRING" id="39946.B8B5U8"/>
<dbReference type="EnsemblPlants" id="BGIOSGA023732-TA">
    <property type="protein sequence ID" value="BGIOSGA023732-PA"/>
    <property type="gene ID" value="BGIOSGA023732"/>
</dbReference>
<dbReference type="EnsemblPlants" id="OsIR64_07g0027750.01">
    <property type="protein sequence ID" value="OsIR64_07g0027750.01"/>
    <property type="gene ID" value="OsIR64_07g0027750"/>
</dbReference>
<dbReference type="EnsemblPlants" id="OsIR64_07g0027750.02">
    <property type="protein sequence ID" value="OsIR64_07g0027750.02"/>
    <property type="gene ID" value="OsIR64_07g0027750"/>
</dbReference>
<dbReference type="EnsemblPlants" id="OsIR64_07g0027750.03">
    <property type="protein sequence ID" value="OsIR64_07g0027750.03"/>
    <property type="gene ID" value="OsIR64_07g0027750"/>
</dbReference>
<dbReference type="EnsemblPlants" id="OsKYG_07g0027470.01">
    <property type="protein sequence ID" value="OsKYG_07g0027470.01"/>
    <property type="gene ID" value="OsKYG_07g0027470"/>
</dbReference>
<dbReference type="EnsemblPlants" id="OsKYG_07g0027470.02">
    <property type="protein sequence ID" value="OsKYG_07g0027470.02"/>
    <property type="gene ID" value="OsKYG_07g0027470"/>
</dbReference>
<dbReference type="EnsemblPlants" id="OsLaMu_07g0027050.01">
    <property type="protein sequence ID" value="OsLaMu_07g0027050.01"/>
    <property type="gene ID" value="OsLaMu_07g0027050"/>
</dbReference>
<dbReference type="EnsemblPlants" id="OsLaMu_07g0027050.02">
    <property type="protein sequence ID" value="OsLaMu_07g0027050.02"/>
    <property type="gene ID" value="OsLaMu_07g0027050"/>
</dbReference>
<dbReference type="EnsemblPlants" id="OsLiXu_Ung0041190.01">
    <property type="protein sequence ID" value="OsLiXu_Ung0041190.01"/>
    <property type="gene ID" value="OsLiXu_Ung0041190"/>
</dbReference>
<dbReference type="EnsemblPlants" id="OsMH63_07G027120_02">
    <property type="protein sequence ID" value="OsMH63_07G027120_02"/>
    <property type="gene ID" value="OsMH63_07G027120"/>
</dbReference>
<dbReference type="EnsemblPlants" id="OsMH63_07G027120_03">
    <property type="protein sequence ID" value="OsMH63_07G027120_03"/>
    <property type="gene ID" value="OsMH63_07G027120"/>
</dbReference>
<dbReference type="EnsemblPlants" id="OsMH63_07G027120_04">
    <property type="protein sequence ID" value="OsMH63_07G027120_04"/>
    <property type="gene ID" value="OsMH63_07G027120"/>
</dbReference>
<dbReference type="EnsemblPlants" id="OsPr106_07g0027250.01">
    <property type="protein sequence ID" value="OsPr106_07g0027250.01"/>
    <property type="gene ID" value="OsPr106_07g0027250"/>
</dbReference>
<dbReference type="EnsemblPlants" id="OsPr106_07g0027250.02">
    <property type="protein sequence ID" value="OsPr106_07g0027250.02"/>
    <property type="gene ID" value="OsPr106_07g0027250"/>
</dbReference>
<dbReference type="EnsemblPlants" id="OsZS97_07G026830_01">
    <property type="protein sequence ID" value="OsZS97_07G026830_01"/>
    <property type="gene ID" value="OsZS97_07G026830"/>
</dbReference>
<dbReference type="EnsemblPlants" id="OsZS97_07G026830_02">
    <property type="protein sequence ID" value="OsZS97_07G026830_02"/>
    <property type="gene ID" value="OsZS97_07G026830"/>
</dbReference>
<dbReference type="Gramene" id="BGIOSGA023732-TA">
    <property type="protein sequence ID" value="BGIOSGA023732-PA"/>
    <property type="gene ID" value="BGIOSGA023732"/>
</dbReference>
<dbReference type="Gramene" id="OsIR64_07g0027750.01">
    <property type="protein sequence ID" value="OsIR64_07g0027750.01"/>
    <property type="gene ID" value="OsIR64_07g0027750"/>
</dbReference>
<dbReference type="Gramene" id="OsIR64_07g0027750.02">
    <property type="protein sequence ID" value="OsIR64_07g0027750.02"/>
    <property type="gene ID" value="OsIR64_07g0027750"/>
</dbReference>
<dbReference type="Gramene" id="OsIR64_07g0027750.03">
    <property type="protein sequence ID" value="OsIR64_07g0027750.03"/>
    <property type="gene ID" value="OsIR64_07g0027750"/>
</dbReference>
<dbReference type="Gramene" id="OsKYG_07g0027470.01">
    <property type="protein sequence ID" value="OsKYG_07g0027470.01"/>
    <property type="gene ID" value="OsKYG_07g0027470"/>
</dbReference>
<dbReference type="Gramene" id="OsKYG_07g0027470.02">
    <property type="protein sequence ID" value="OsKYG_07g0027470.02"/>
    <property type="gene ID" value="OsKYG_07g0027470"/>
</dbReference>
<dbReference type="Gramene" id="OsLaMu_07g0027050.01">
    <property type="protein sequence ID" value="OsLaMu_07g0027050.01"/>
    <property type="gene ID" value="OsLaMu_07g0027050"/>
</dbReference>
<dbReference type="Gramene" id="OsLaMu_07g0027050.02">
    <property type="protein sequence ID" value="OsLaMu_07g0027050.02"/>
    <property type="gene ID" value="OsLaMu_07g0027050"/>
</dbReference>
<dbReference type="Gramene" id="OsLiXu_Ung0041190.01">
    <property type="protein sequence ID" value="OsLiXu_Ung0041190.01"/>
    <property type="gene ID" value="OsLiXu_Ung0041190"/>
</dbReference>
<dbReference type="Gramene" id="OsMH63_07G027120_02">
    <property type="protein sequence ID" value="OsMH63_07G027120_02"/>
    <property type="gene ID" value="OsMH63_07G027120"/>
</dbReference>
<dbReference type="Gramene" id="OsMH63_07G027120_03">
    <property type="protein sequence ID" value="OsMH63_07G027120_03"/>
    <property type="gene ID" value="OsMH63_07G027120"/>
</dbReference>
<dbReference type="Gramene" id="OsMH63_07G027120_04">
    <property type="protein sequence ID" value="OsMH63_07G027120_04"/>
    <property type="gene ID" value="OsMH63_07G027120"/>
</dbReference>
<dbReference type="Gramene" id="OsPr106_07g0027250.01">
    <property type="protein sequence ID" value="OsPr106_07g0027250.01"/>
    <property type="gene ID" value="OsPr106_07g0027250"/>
</dbReference>
<dbReference type="Gramene" id="OsPr106_07g0027250.02">
    <property type="protein sequence ID" value="OsPr106_07g0027250.02"/>
    <property type="gene ID" value="OsPr106_07g0027250"/>
</dbReference>
<dbReference type="Gramene" id="OsZS97_07G026830_01">
    <property type="protein sequence ID" value="OsZS97_07G026830_01"/>
    <property type="gene ID" value="OsZS97_07G026830"/>
</dbReference>
<dbReference type="Gramene" id="OsZS97_07G026830_02">
    <property type="protein sequence ID" value="OsZS97_07G026830_02"/>
    <property type="gene ID" value="OsZS97_07G026830"/>
</dbReference>
<dbReference type="HOGENOM" id="CLU_058131_0_0_1"/>
<dbReference type="OMA" id="MCACSSA"/>
<dbReference type="UniPathway" id="UPA00143"/>
<dbReference type="Proteomes" id="UP000007015">
    <property type="component" value="Chromosome 7"/>
</dbReference>
<dbReference type="GO" id="GO:0016740">
    <property type="term" value="F:transferase activity"/>
    <property type="evidence" value="ECO:0007669"/>
    <property type="project" value="UniProtKB-KW"/>
</dbReference>
<dbReference type="GO" id="GO:0008270">
    <property type="term" value="F:zinc ion binding"/>
    <property type="evidence" value="ECO:0007669"/>
    <property type="project" value="UniProtKB-KW"/>
</dbReference>
<dbReference type="GO" id="GO:0016567">
    <property type="term" value="P:protein ubiquitination"/>
    <property type="evidence" value="ECO:0007669"/>
    <property type="project" value="UniProtKB-UniPathway"/>
</dbReference>
<dbReference type="CDD" id="cd23127">
    <property type="entry name" value="RING-HC_BAH1-like"/>
    <property type="match status" value="1"/>
</dbReference>
<dbReference type="CDD" id="cd14482">
    <property type="entry name" value="SPX_BAH1-like"/>
    <property type="match status" value="1"/>
</dbReference>
<dbReference type="Gene3D" id="3.30.40.10">
    <property type="entry name" value="Zinc/RING finger domain, C3HC4 (zinc finger)"/>
    <property type="match status" value="1"/>
</dbReference>
<dbReference type="InterPro" id="IPR033326">
    <property type="entry name" value="BAH1"/>
</dbReference>
<dbReference type="InterPro" id="IPR004331">
    <property type="entry name" value="SPX_dom"/>
</dbReference>
<dbReference type="InterPro" id="IPR027370">
    <property type="entry name" value="Znf-RING_euk"/>
</dbReference>
<dbReference type="InterPro" id="IPR001841">
    <property type="entry name" value="Znf_RING"/>
</dbReference>
<dbReference type="InterPro" id="IPR013083">
    <property type="entry name" value="Znf_RING/FYVE/PHD"/>
</dbReference>
<dbReference type="PANTHER" id="PTHR46764">
    <property type="entry name" value="E3 UBIQUITIN-PROTEIN LIGASE BAH1"/>
    <property type="match status" value="1"/>
</dbReference>
<dbReference type="PANTHER" id="PTHR46764:SF1">
    <property type="entry name" value="E3 UBIQUITIN-PROTEIN LIGASE NLA"/>
    <property type="match status" value="1"/>
</dbReference>
<dbReference type="Pfam" id="PF13445">
    <property type="entry name" value="zf-RING_UBOX"/>
    <property type="match status" value="1"/>
</dbReference>
<dbReference type="SMART" id="SM00184">
    <property type="entry name" value="RING"/>
    <property type="match status" value="1"/>
</dbReference>
<dbReference type="SUPFAM" id="SSF57850">
    <property type="entry name" value="RING/U-box"/>
    <property type="match status" value="1"/>
</dbReference>
<dbReference type="PROSITE" id="PS51382">
    <property type="entry name" value="SPX"/>
    <property type="match status" value="1"/>
</dbReference>
<dbReference type="PROSITE" id="PS50089">
    <property type="entry name" value="ZF_RING_2"/>
    <property type="match status" value="1"/>
</dbReference>
<organism>
    <name type="scientific">Oryza sativa subsp. indica</name>
    <name type="common">Rice</name>
    <dbReference type="NCBI Taxonomy" id="39946"/>
    <lineage>
        <taxon>Eukaryota</taxon>
        <taxon>Viridiplantae</taxon>
        <taxon>Streptophyta</taxon>
        <taxon>Embryophyta</taxon>
        <taxon>Tracheophyta</taxon>
        <taxon>Spermatophyta</taxon>
        <taxon>Magnoliopsida</taxon>
        <taxon>Liliopsida</taxon>
        <taxon>Poales</taxon>
        <taxon>Poaceae</taxon>
        <taxon>BOP clade</taxon>
        <taxon>Oryzoideae</taxon>
        <taxon>Oryzeae</taxon>
        <taxon>Oryzinae</taxon>
        <taxon>Oryza</taxon>
        <taxon>Oryza sativa</taxon>
    </lineage>
</organism>
<reference key="1">
    <citation type="journal article" date="2005" name="PLoS Biol.">
        <title>The genomes of Oryza sativa: a history of duplications.</title>
        <authorList>
            <person name="Yu J."/>
            <person name="Wang J."/>
            <person name="Lin W."/>
            <person name="Li S."/>
            <person name="Li H."/>
            <person name="Zhou J."/>
            <person name="Ni P."/>
            <person name="Dong W."/>
            <person name="Hu S."/>
            <person name="Zeng C."/>
            <person name="Zhang J."/>
            <person name="Zhang Y."/>
            <person name="Li R."/>
            <person name="Xu Z."/>
            <person name="Li S."/>
            <person name="Li X."/>
            <person name="Zheng H."/>
            <person name="Cong L."/>
            <person name="Lin L."/>
            <person name="Yin J."/>
            <person name="Geng J."/>
            <person name="Li G."/>
            <person name="Shi J."/>
            <person name="Liu J."/>
            <person name="Lv H."/>
            <person name="Li J."/>
            <person name="Wang J."/>
            <person name="Deng Y."/>
            <person name="Ran L."/>
            <person name="Shi X."/>
            <person name="Wang X."/>
            <person name="Wu Q."/>
            <person name="Li C."/>
            <person name="Ren X."/>
            <person name="Wang J."/>
            <person name="Wang X."/>
            <person name="Li D."/>
            <person name="Liu D."/>
            <person name="Zhang X."/>
            <person name="Ji Z."/>
            <person name="Zhao W."/>
            <person name="Sun Y."/>
            <person name="Zhang Z."/>
            <person name="Bao J."/>
            <person name="Han Y."/>
            <person name="Dong L."/>
            <person name="Ji J."/>
            <person name="Chen P."/>
            <person name="Wu S."/>
            <person name="Liu J."/>
            <person name="Xiao Y."/>
            <person name="Bu D."/>
            <person name="Tan J."/>
            <person name="Yang L."/>
            <person name="Ye C."/>
            <person name="Zhang J."/>
            <person name="Xu J."/>
            <person name="Zhou Y."/>
            <person name="Yu Y."/>
            <person name="Zhang B."/>
            <person name="Zhuang S."/>
            <person name="Wei H."/>
            <person name="Liu B."/>
            <person name="Lei M."/>
            <person name="Yu H."/>
            <person name="Li Y."/>
            <person name="Xu H."/>
            <person name="Wei S."/>
            <person name="He X."/>
            <person name="Fang L."/>
            <person name="Zhang Z."/>
            <person name="Zhang Y."/>
            <person name="Huang X."/>
            <person name="Su Z."/>
            <person name="Tong W."/>
            <person name="Li J."/>
            <person name="Tong Z."/>
            <person name="Li S."/>
            <person name="Ye J."/>
            <person name="Wang L."/>
            <person name="Fang L."/>
            <person name="Lei T."/>
            <person name="Chen C.-S."/>
            <person name="Chen H.-C."/>
            <person name="Xu Z."/>
            <person name="Li H."/>
            <person name="Huang H."/>
            <person name="Zhang F."/>
            <person name="Xu H."/>
            <person name="Li N."/>
            <person name="Zhao C."/>
            <person name="Li S."/>
            <person name="Dong L."/>
            <person name="Huang Y."/>
            <person name="Li L."/>
            <person name="Xi Y."/>
            <person name="Qi Q."/>
            <person name="Li W."/>
            <person name="Zhang B."/>
            <person name="Hu W."/>
            <person name="Zhang Y."/>
            <person name="Tian X."/>
            <person name="Jiao Y."/>
            <person name="Liang X."/>
            <person name="Jin J."/>
            <person name="Gao L."/>
            <person name="Zheng W."/>
            <person name="Hao B."/>
            <person name="Liu S.-M."/>
            <person name="Wang W."/>
            <person name="Yuan L."/>
            <person name="Cao M."/>
            <person name="McDermott J."/>
            <person name="Samudrala R."/>
            <person name="Wang J."/>
            <person name="Wong G.K.-S."/>
            <person name="Yang H."/>
        </authorList>
    </citation>
    <scope>NUCLEOTIDE SEQUENCE [LARGE SCALE GENOMIC DNA]</scope>
    <source>
        <strain>cv. 93-11</strain>
    </source>
</reference>
<keyword id="KW-0479">Metal-binding</keyword>
<keyword id="KW-1185">Reference proteome</keyword>
<keyword id="KW-0808">Transferase</keyword>
<keyword id="KW-0833">Ubl conjugation pathway</keyword>
<keyword id="KW-0862">Zinc</keyword>
<keyword id="KW-0863">Zinc-finger</keyword>